<feature type="chain" id="PRO_0000046535" description="DNA polymerase">
    <location>
        <begin position="1"/>
        <end position="988"/>
    </location>
</feature>
<feature type="sequence conflict" description="In Ref. 1; AAA43821." evidence="2" ref="1">
    <original>E</original>
    <variation>Q</variation>
    <location>
        <position position="840"/>
    </location>
</feature>
<proteinExistence type="inferred from homology"/>
<name>DPOL_FOWPN</name>
<dbReference type="EC" id="2.7.7.7"/>
<dbReference type="EMBL" id="M31638">
    <property type="protein sequence ID" value="AAA43821.1"/>
    <property type="molecule type" value="Genomic_DNA"/>
</dbReference>
<dbReference type="EMBL" id="AF198100">
    <property type="protein sequence ID" value="AAF44438.1"/>
    <property type="molecule type" value="Genomic_DNA"/>
</dbReference>
<dbReference type="RefSeq" id="NP_039057.1">
    <property type="nucleotide sequence ID" value="NC_002188.1"/>
</dbReference>
<dbReference type="SMR" id="P21402"/>
<dbReference type="GeneID" id="1486642"/>
<dbReference type="KEGG" id="vg:1486642"/>
<dbReference type="Proteomes" id="UP000008597">
    <property type="component" value="Segment"/>
</dbReference>
<dbReference type="GO" id="GO:0003677">
    <property type="term" value="F:DNA binding"/>
    <property type="evidence" value="ECO:0007669"/>
    <property type="project" value="UniProtKB-KW"/>
</dbReference>
<dbReference type="GO" id="GO:0003887">
    <property type="term" value="F:DNA-directed DNA polymerase activity"/>
    <property type="evidence" value="ECO:0007669"/>
    <property type="project" value="UniProtKB-KW"/>
</dbReference>
<dbReference type="GO" id="GO:0000166">
    <property type="term" value="F:nucleotide binding"/>
    <property type="evidence" value="ECO:0007669"/>
    <property type="project" value="InterPro"/>
</dbReference>
<dbReference type="GO" id="GO:0006260">
    <property type="term" value="P:DNA replication"/>
    <property type="evidence" value="ECO:0007669"/>
    <property type="project" value="UniProtKB-KW"/>
</dbReference>
<dbReference type="GO" id="GO:0039693">
    <property type="term" value="P:viral DNA genome replication"/>
    <property type="evidence" value="ECO:0007669"/>
    <property type="project" value="UniProtKB-KW"/>
</dbReference>
<dbReference type="Gene3D" id="1.10.287.690">
    <property type="entry name" value="Helix hairpin bin"/>
    <property type="match status" value="1"/>
</dbReference>
<dbReference type="Gene3D" id="3.90.1600.10">
    <property type="entry name" value="Palm domain of DNA polymerase"/>
    <property type="match status" value="2"/>
</dbReference>
<dbReference type="Gene3D" id="3.30.420.10">
    <property type="entry name" value="Ribonuclease H-like superfamily/Ribonuclease H"/>
    <property type="match status" value="1"/>
</dbReference>
<dbReference type="InterPro" id="IPR006172">
    <property type="entry name" value="DNA-dir_DNA_pol_B"/>
</dbReference>
<dbReference type="InterPro" id="IPR017964">
    <property type="entry name" value="DNA-dir_DNA_pol_B_CS"/>
</dbReference>
<dbReference type="InterPro" id="IPR006133">
    <property type="entry name" value="DNA-dir_DNA_pol_B_exonuc"/>
</dbReference>
<dbReference type="InterPro" id="IPR006134">
    <property type="entry name" value="DNA-dir_DNA_pol_B_multi_dom"/>
</dbReference>
<dbReference type="InterPro" id="IPR013617">
    <property type="entry name" value="DNA-dir_DNA_pol_B_vir_insert"/>
</dbReference>
<dbReference type="InterPro" id="IPR043502">
    <property type="entry name" value="DNA/RNA_pol_sf"/>
</dbReference>
<dbReference type="InterPro" id="IPR023211">
    <property type="entry name" value="DNA_pol_palm_dom_sf"/>
</dbReference>
<dbReference type="InterPro" id="IPR050240">
    <property type="entry name" value="DNA_pol_type-B"/>
</dbReference>
<dbReference type="InterPro" id="IPR013660">
    <property type="entry name" value="DNApol_B_exo_N"/>
</dbReference>
<dbReference type="InterPro" id="IPR012337">
    <property type="entry name" value="RNaseH-like_sf"/>
</dbReference>
<dbReference type="InterPro" id="IPR036397">
    <property type="entry name" value="RNaseH_sf"/>
</dbReference>
<dbReference type="PANTHER" id="PTHR10322">
    <property type="entry name" value="DNA POLYMERASE CATALYTIC SUBUNIT"/>
    <property type="match status" value="1"/>
</dbReference>
<dbReference type="PANTHER" id="PTHR10322:SF23">
    <property type="entry name" value="DNA POLYMERASE DELTA CATALYTIC SUBUNIT"/>
    <property type="match status" value="1"/>
</dbReference>
<dbReference type="Pfam" id="PF00136">
    <property type="entry name" value="DNA_pol_B"/>
    <property type="match status" value="1"/>
</dbReference>
<dbReference type="Pfam" id="PF08408">
    <property type="entry name" value="DNA_pol_B_3"/>
    <property type="match status" value="1"/>
</dbReference>
<dbReference type="Pfam" id="PF03104">
    <property type="entry name" value="DNA_pol_B_exo1"/>
    <property type="match status" value="1"/>
</dbReference>
<dbReference type="Pfam" id="PF08452">
    <property type="entry name" value="DNAP_B_exo_N"/>
    <property type="match status" value="1"/>
</dbReference>
<dbReference type="PRINTS" id="PR00106">
    <property type="entry name" value="DNAPOLB"/>
</dbReference>
<dbReference type="SMART" id="SM00486">
    <property type="entry name" value="POLBc"/>
    <property type="match status" value="1"/>
</dbReference>
<dbReference type="SUPFAM" id="SSF56672">
    <property type="entry name" value="DNA/RNA polymerases"/>
    <property type="match status" value="1"/>
</dbReference>
<dbReference type="SUPFAM" id="SSF53098">
    <property type="entry name" value="Ribonuclease H-like"/>
    <property type="match status" value="1"/>
</dbReference>
<dbReference type="PROSITE" id="PS00116">
    <property type="entry name" value="DNA_POLYMERASE_B"/>
    <property type="match status" value="1"/>
</dbReference>
<sequence length="988" mass="116661">MDIRCVNWFENKGETKYIYLKAINRESNVIFIRFNYYYHYVYDASKELEYKPNECIDLGPFKIINIDEKLSTDIRYVEPRNYYTSELVLVKDLKRNREKQYLQEYLDITWFYLLNNITPDGCYKIDIEHLTPIKKDCYHCDDVSKVFIQEIPIFEVKFTYLLFDIECQFDKKFPSVFVNPISHISCWIIDKVTEYKFTLINTDILPDKEPSILHHKDFSPKDRITYCTEIVMLLIMKKILEHRFDFVITFNGNNFDIRYISGRLEILEKSFIYFSLPDATETVKLKIFERFVTGGTFTNKTYHINNNNGVMFFDLYAFIQKTERLDSYKLDSISKNIFNCNVAIKEIDDTILTLEATVKDNSKDKLSIFSRVLETGNYITIGDNNVSKIVYKDINQDSFIIKVISNRDYEIGSVHNISFGKDDVDLKDMYKNYNLEIALDMERYCIHDACLCKYIWDYYRVPSKINAASSTYLLPQSLALEYRASTLIKGPLLKLLLEERVIYTRKITKVRYPYIGGKVFLPSQKTFENNVMIFDYNSLYPNVCIYGNLSPEKLVCILLNSNKLESEINMRTIKSKYPYPEYVCVSCESRLSDYYSEIIVYDRREKGIIPKLLEMFIGKRKEYKNLLKTASTTIESTLYDSLQYIYKIIANSVYGLMGFSNSTLYSYSSAKTCTTIGRNMITYLDSIMNGAVWENDKLILADFPRNIFSGETMFNKELEVPNMNESFKFRSVYGDTDSIFSEISTKDIEKTAKIAKHLEHIINTKILHANFKIEFEAIYTQLILQSKKKYTTIKYLANYKPGDKPIRVNKGTSETRRDVALFHKHMIQRYKDMLMKLLMESKGQQEITRLILQSLETDMISEFTHNREFEKYLLSRKHHNNYKSATHSNFELVKRYNLENTEKIEIGERYYYIYICDISLPWQKKLCNILSYEVIADSKFYLPKDKRIFYEIYFKRIASEVVNLLTDKTQCMLFFSRLFGTKPVFSSD</sequence>
<organismHost>
    <name type="scientific">Vertebrata</name>
    <dbReference type="NCBI Taxonomy" id="7742"/>
</organismHost>
<gene>
    <name type="primary">POL</name>
    <name type="ordered locus">FPV094</name>
</gene>
<comment type="function">
    <text evidence="1">Catalyzes DNA synthesis. Acquires processivity by associating with a heterodimeric processivity factor comprised of the viral A20 and D4 proteins, thereby forming the DNA polymerase holoenzyme. Displays 3'- to 5' exonuclease activity. Might participate in viral DNA recombination. Does not perform translesion synthesis across an abasic site (By similarity).</text>
</comment>
<comment type="catalytic activity">
    <reaction>
        <text>DNA(n) + a 2'-deoxyribonucleoside 5'-triphosphate = DNA(n+1) + diphosphate</text>
        <dbReference type="Rhea" id="RHEA:22508"/>
        <dbReference type="Rhea" id="RHEA-COMP:17339"/>
        <dbReference type="Rhea" id="RHEA-COMP:17340"/>
        <dbReference type="ChEBI" id="CHEBI:33019"/>
        <dbReference type="ChEBI" id="CHEBI:61560"/>
        <dbReference type="ChEBI" id="CHEBI:173112"/>
        <dbReference type="EC" id="2.7.7.7"/>
    </reaction>
</comment>
<comment type="subunit">
    <text evidence="1">Interacts with A20. Component of the Uracil-DNA glycosylase(UDG)-A20-polymerase complex; A20 and UDG form a heterodimeric processivity factor that associates with E9 to form the processive polymerase holoenzyme (By similarity).</text>
</comment>
<comment type="similarity">
    <text evidence="2">Belongs to the DNA polymerase type-B family.</text>
</comment>
<protein>
    <recommendedName>
        <fullName>DNA polymerase</fullName>
        <ecNumber>2.7.7.7</ecNumber>
    </recommendedName>
</protein>
<reference key="1">
    <citation type="journal article" date="1987" name="Nucleic Acids Res.">
        <title>Identification by a random sequencing strategy of the fowlpoxvirus DNA polymerase gene, its nucleotide sequence and comparison with other viral DNA polymerases.</title>
        <authorList>
            <person name="Binns M.M."/>
            <person name="Stenzler L."/>
            <person name="Tomley F.M."/>
            <person name="Campbell J."/>
            <person name="Boursnell M.E.G."/>
        </authorList>
    </citation>
    <scope>NUCLEOTIDE SEQUENCE [GENOMIC DNA]</scope>
    <source>
        <strain>FP-9 / Isolate HP-444</strain>
    </source>
</reference>
<reference key="2">
    <citation type="journal article" date="2000" name="J. Virol.">
        <title>The genome of fowlpox virus.</title>
        <authorList>
            <person name="Afonso C.L."/>
            <person name="Tulman E.R."/>
            <person name="Lu Z."/>
            <person name="Zsak L."/>
            <person name="Kutish G.F."/>
            <person name="Rock D.L."/>
        </authorList>
    </citation>
    <scope>NUCLEOTIDE SEQUENCE [LARGE SCALE GENOMIC DNA]</scope>
</reference>
<organism>
    <name type="scientific">Fowlpox virus (strain NVSL)</name>
    <name type="common">FPV</name>
    <dbReference type="NCBI Taxonomy" id="928301"/>
    <lineage>
        <taxon>Viruses</taxon>
        <taxon>Varidnaviria</taxon>
        <taxon>Bamfordvirae</taxon>
        <taxon>Nucleocytoviricota</taxon>
        <taxon>Pokkesviricetes</taxon>
        <taxon>Chitovirales</taxon>
        <taxon>Poxviridae</taxon>
        <taxon>Chordopoxvirinae</taxon>
        <taxon>Avipoxvirus</taxon>
        <taxon>Fowlpox virus</taxon>
    </lineage>
</organism>
<evidence type="ECO:0000250" key="1"/>
<evidence type="ECO:0000305" key="2"/>
<accession>P21402</accession>
<accession>Q9J5C6</accession>
<keyword id="KW-0235">DNA replication</keyword>
<keyword id="KW-0238">DNA-binding</keyword>
<keyword id="KW-0239">DNA-directed DNA polymerase</keyword>
<keyword id="KW-0548">Nucleotidyltransferase</keyword>
<keyword id="KW-1185">Reference proteome</keyword>
<keyword id="KW-0808">Transferase</keyword>
<keyword id="KW-1194">Viral DNA replication</keyword>